<organism>
    <name type="scientific">Homo sapiens</name>
    <name type="common">Human</name>
    <dbReference type="NCBI Taxonomy" id="9606"/>
    <lineage>
        <taxon>Eukaryota</taxon>
        <taxon>Metazoa</taxon>
        <taxon>Chordata</taxon>
        <taxon>Craniata</taxon>
        <taxon>Vertebrata</taxon>
        <taxon>Euteleostomi</taxon>
        <taxon>Mammalia</taxon>
        <taxon>Eutheria</taxon>
        <taxon>Euarchontoglires</taxon>
        <taxon>Primates</taxon>
        <taxon>Haplorrhini</taxon>
        <taxon>Catarrhini</taxon>
        <taxon>Hominidae</taxon>
        <taxon>Homo</taxon>
    </lineage>
</organism>
<gene>
    <name type="primary">LRRC47</name>
    <name type="synonym">KIAA1185</name>
</gene>
<sequence length="583" mass="63473">MAAAAVSESWPELELAERERRRELLLTGPGLEERVRAAGGQLPPRLFTLPLLHYLEVSGCGSLRAPGPGLAQGLPQLHSLVLRRNALGPGLSPELGPLPALRVLDLSGNALEALPPGQGLGPAEPPGLPQLQSLNLSGNRLRELPADLARCAPRLQSLNLTGNCLDSFPAELFRPGALPLLSELAAADNCLRELSPDIAHLASLKTLDLSNNQLSEIPAELADCPKLKEINFRGNKLRDKRLEKMVSGCQTRSILEYLRVGGRGGGKGKGRAEGSEKEESRRKRRERKQRREGGDGEEQDVGDAGRLLLRVLHVSENPVPLTVRVSPEVRDVRPYIVGAVVRGMDLQPGNALKRFLTSQTKLHEDLCEKRTAATLATHELRAVKGPLLYCARPPQDLKIVPLGRKEAKAKELVRQLQLEAEEQRKQKKRQSVSGLHRYLHLLDGNENYPCLVDADGDVISFPPITNSEKTKVKKTTSDLFLEVTSATSLQICKDVMDALILKMAEMKKYTLENKEEGSLSDTEADAVSGQLPDPTTNPSAGKDGPSLLVVEQVRVVDLEGSLKVVYPSKADLATAPPHVTVVR</sequence>
<evidence type="ECO:0000255" key="1"/>
<evidence type="ECO:0000256" key="2">
    <source>
        <dbReference type="SAM" id="MobiDB-lite"/>
    </source>
</evidence>
<evidence type="ECO:0000269" key="3">
    <source>
    </source>
</evidence>
<evidence type="ECO:0000269" key="4">
    <source ref="3"/>
</evidence>
<evidence type="ECO:0007744" key="5">
    <source>
    </source>
</evidence>
<evidence type="ECO:0007744" key="6">
    <source>
    </source>
</evidence>
<evidence type="ECO:0007744" key="7">
    <source>
    </source>
</evidence>
<evidence type="ECO:0007744" key="8">
    <source>
    </source>
</evidence>
<evidence type="ECO:0007744" key="9">
    <source>
    </source>
</evidence>
<evidence type="ECO:0007744" key="10">
    <source>
    </source>
</evidence>
<evidence type="ECO:0007744" key="11">
    <source>
    </source>
</evidence>
<evidence type="ECO:0007829" key="12">
    <source>
        <dbReference type="PDB" id="6ZXD"/>
    </source>
</evidence>
<evidence type="ECO:0007829" key="13">
    <source>
        <dbReference type="PDB" id="6ZXE"/>
    </source>
</evidence>
<evidence type="ECO:0007829" key="14">
    <source>
        <dbReference type="PDB" id="6ZXG"/>
    </source>
</evidence>
<reference key="1">
    <citation type="journal article" date="2006" name="Nature">
        <title>The DNA sequence and biological annotation of human chromosome 1.</title>
        <authorList>
            <person name="Gregory S.G."/>
            <person name="Barlow K.F."/>
            <person name="McLay K.E."/>
            <person name="Kaul R."/>
            <person name="Swarbreck D."/>
            <person name="Dunham A."/>
            <person name="Scott C.E."/>
            <person name="Howe K.L."/>
            <person name="Woodfine K."/>
            <person name="Spencer C.C.A."/>
            <person name="Jones M.C."/>
            <person name="Gillson C."/>
            <person name="Searle S."/>
            <person name="Zhou Y."/>
            <person name="Kokocinski F."/>
            <person name="McDonald L."/>
            <person name="Evans R."/>
            <person name="Phillips K."/>
            <person name="Atkinson A."/>
            <person name="Cooper R."/>
            <person name="Jones C."/>
            <person name="Hall R.E."/>
            <person name="Andrews T.D."/>
            <person name="Lloyd C."/>
            <person name="Ainscough R."/>
            <person name="Almeida J.P."/>
            <person name="Ambrose K.D."/>
            <person name="Anderson F."/>
            <person name="Andrew R.W."/>
            <person name="Ashwell R.I.S."/>
            <person name="Aubin K."/>
            <person name="Babbage A.K."/>
            <person name="Bagguley C.L."/>
            <person name="Bailey J."/>
            <person name="Beasley H."/>
            <person name="Bethel G."/>
            <person name="Bird C.P."/>
            <person name="Bray-Allen S."/>
            <person name="Brown J.Y."/>
            <person name="Brown A.J."/>
            <person name="Buckley D."/>
            <person name="Burton J."/>
            <person name="Bye J."/>
            <person name="Carder C."/>
            <person name="Chapman J.C."/>
            <person name="Clark S.Y."/>
            <person name="Clarke G."/>
            <person name="Clee C."/>
            <person name="Cobley V."/>
            <person name="Collier R.E."/>
            <person name="Corby N."/>
            <person name="Coville G.J."/>
            <person name="Davies J."/>
            <person name="Deadman R."/>
            <person name="Dunn M."/>
            <person name="Earthrowl M."/>
            <person name="Ellington A.G."/>
            <person name="Errington H."/>
            <person name="Frankish A."/>
            <person name="Frankland J."/>
            <person name="French L."/>
            <person name="Garner P."/>
            <person name="Garnett J."/>
            <person name="Gay L."/>
            <person name="Ghori M.R.J."/>
            <person name="Gibson R."/>
            <person name="Gilby L.M."/>
            <person name="Gillett W."/>
            <person name="Glithero R.J."/>
            <person name="Grafham D.V."/>
            <person name="Griffiths C."/>
            <person name="Griffiths-Jones S."/>
            <person name="Grocock R."/>
            <person name="Hammond S."/>
            <person name="Harrison E.S.I."/>
            <person name="Hart E."/>
            <person name="Haugen E."/>
            <person name="Heath P.D."/>
            <person name="Holmes S."/>
            <person name="Holt K."/>
            <person name="Howden P.J."/>
            <person name="Hunt A.R."/>
            <person name="Hunt S.E."/>
            <person name="Hunter G."/>
            <person name="Isherwood J."/>
            <person name="James R."/>
            <person name="Johnson C."/>
            <person name="Johnson D."/>
            <person name="Joy A."/>
            <person name="Kay M."/>
            <person name="Kershaw J.K."/>
            <person name="Kibukawa M."/>
            <person name="Kimberley A.M."/>
            <person name="King A."/>
            <person name="Knights A.J."/>
            <person name="Lad H."/>
            <person name="Laird G."/>
            <person name="Lawlor S."/>
            <person name="Leongamornlert D.A."/>
            <person name="Lloyd D.M."/>
            <person name="Loveland J."/>
            <person name="Lovell J."/>
            <person name="Lush M.J."/>
            <person name="Lyne R."/>
            <person name="Martin S."/>
            <person name="Mashreghi-Mohammadi M."/>
            <person name="Matthews L."/>
            <person name="Matthews N.S.W."/>
            <person name="McLaren S."/>
            <person name="Milne S."/>
            <person name="Mistry S."/>
            <person name="Moore M.J.F."/>
            <person name="Nickerson T."/>
            <person name="O'Dell C.N."/>
            <person name="Oliver K."/>
            <person name="Palmeiri A."/>
            <person name="Palmer S.A."/>
            <person name="Parker A."/>
            <person name="Patel D."/>
            <person name="Pearce A.V."/>
            <person name="Peck A.I."/>
            <person name="Pelan S."/>
            <person name="Phelps K."/>
            <person name="Phillimore B.J."/>
            <person name="Plumb R."/>
            <person name="Rajan J."/>
            <person name="Raymond C."/>
            <person name="Rouse G."/>
            <person name="Saenphimmachak C."/>
            <person name="Sehra H.K."/>
            <person name="Sheridan E."/>
            <person name="Shownkeen R."/>
            <person name="Sims S."/>
            <person name="Skuce C.D."/>
            <person name="Smith M."/>
            <person name="Steward C."/>
            <person name="Subramanian S."/>
            <person name="Sycamore N."/>
            <person name="Tracey A."/>
            <person name="Tromans A."/>
            <person name="Van Helmond Z."/>
            <person name="Wall M."/>
            <person name="Wallis J.M."/>
            <person name="White S."/>
            <person name="Whitehead S.L."/>
            <person name="Wilkinson J.E."/>
            <person name="Willey D.L."/>
            <person name="Williams H."/>
            <person name="Wilming L."/>
            <person name="Wray P.W."/>
            <person name="Wu Z."/>
            <person name="Coulson A."/>
            <person name="Vaudin M."/>
            <person name="Sulston J.E."/>
            <person name="Durbin R.M."/>
            <person name="Hubbard T."/>
            <person name="Wooster R."/>
            <person name="Dunham I."/>
            <person name="Carter N.P."/>
            <person name="McVean G."/>
            <person name="Ross M.T."/>
            <person name="Harrow J."/>
            <person name="Olson M.V."/>
            <person name="Beck S."/>
            <person name="Rogers J."/>
            <person name="Bentley D.R."/>
        </authorList>
    </citation>
    <scope>NUCLEOTIDE SEQUENCE [LARGE SCALE GENOMIC DNA]</scope>
</reference>
<reference key="2">
    <citation type="journal article" date="2004" name="Genome Res.">
        <title>The status, quality, and expansion of the NIH full-length cDNA project: the Mammalian Gene Collection (MGC).</title>
        <authorList>
            <consortium name="The MGC Project Team"/>
        </authorList>
    </citation>
    <scope>NUCLEOTIDE SEQUENCE [LARGE SCALE MRNA]</scope>
    <source>
        <tissue>Uterus</tissue>
    </source>
</reference>
<reference key="3">
    <citation type="submission" date="2007-07" db="UniProtKB">
        <authorList>
            <person name="Bienvenut W.V."/>
            <person name="Boldt K."/>
            <person name="von Kriegsheim A.F."/>
            <person name="Kolch W."/>
        </authorList>
    </citation>
    <scope>PROTEIN SEQUENCE OF 2-18; 23-34; 65-83; 85-102; 371-381 AND 494-502</scope>
    <scope>CLEAVAGE OF INITIATOR METHIONINE</scope>
    <scope>ACETYLATION AT ALA-2</scope>
    <scope>IDENTIFICATION BY MASS SPECTROMETRY</scope>
    <source>
        <tissue>Hepatoma</tissue>
    </source>
</reference>
<reference key="4">
    <citation type="journal article" date="1999" name="DNA Res.">
        <title>Characterization of cDNA clones selected by the GeneMark analysis from size-fractionated cDNA libraries from human brain.</title>
        <authorList>
            <person name="Hirosawa M."/>
            <person name="Nagase T."/>
            <person name="Ishikawa K."/>
            <person name="Kikuno R."/>
            <person name="Nomura N."/>
            <person name="Ohara O."/>
        </authorList>
    </citation>
    <scope>NUCLEOTIDE SEQUENCE [LARGE SCALE MRNA] OF 181-583</scope>
    <source>
        <tissue>Brain</tissue>
    </source>
</reference>
<reference key="5">
    <citation type="journal article" date="2008" name="Proc. Natl. Acad. Sci. U.S.A.">
        <title>A quantitative atlas of mitotic phosphorylation.</title>
        <authorList>
            <person name="Dephoure N."/>
            <person name="Zhou C."/>
            <person name="Villen J."/>
            <person name="Beausoleil S.A."/>
            <person name="Bakalarski C.E."/>
            <person name="Elledge S.J."/>
            <person name="Gygi S.P."/>
        </authorList>
    </citation>
    <scope>PHOSPHORYLATION [LARGE SCALE ANALYSIS] AT SER-520</scope>
    <scope>IDENTIFICATION BY MASS SPECTROMETRY [LARGE SCALE ANALYSIS]</scope>
    <source>
        <tissue>Cervix carcinoma</tissue>
    </source>
</reference>
<reference key="6">
    <citation type="journal article" date="2009" name="Anal. Chem.">
        <title>Lys-N and trypsin cover complementary parts of the phosphoproteome in a refined SCX-based approach.</title>
        <authorList>
            <person name="Gauci S."/>
            <person name="Helbig A.O."/>
            <person name="Slijper M."/>
            <person name="Krijgsveld J."/>
            <person name="Heck A.J."/>
            <person name="Mohammed S."/>
        </authorList>
    </citation>
    <scope>IDENTIFICATION BY MASS SPECTROMETRY [LARGE SCALE ANALYSIS]</scope>
</reference>
<reference key="7">
    <citation type="journal article" date="2009" name="Sci. Signal.">
        <title>Quantitative phosphoproteomic analysis of T cell receptor signaling reveals system-wide modulation of protein-protein interactions.</title>
        <authorList>
            <person name="Mayya V."/>
            <person name="Lundgren D.H."/>
            <person name="Hwang S.-I."/>
            <person name="Rezaul K."/>
            <person name="Wu L."/>
            <person name="Eng J.K."/>
            <person name="Rodionov V."/>
            <person name="Han D.K."/>
        </authorList>
    </citation>
    <scope>PHOSPHORYLATION [LARGE SCALE ANALYSIS] AT TYR-509 AND SER-520</scope>
    <scope>IDENTIFICATION BY MASS SPECTROMETRY [LARGE SCALE ANALYSIS]</scope>
    <source>
        <tissue>Leukemic T-cell</tissue>
    </source>
</reference>
<reference key="8">
    <citation type="journal article" date="2010" name="Sci. Signal.">
        <title>Quantitative phosphoproteomics reveals widespread full phosphorylation site occupancy during mitosis.</title>
        <authorList>
            <person name="Olsen J.V."/>
            <person name="Vermeulen M."/>
            <person name="Santamaria A."/>
            <person name="Kumar C."/>
            <person name="Miller M.L."/>
            <person name="Jensen L.J."/>
            <person name="Gnad F."/>
            <person name="Cox J."/>
            <person name="Jensen T.S."/>
            <person name="Nigg E.A."/>
            <person name="Brunak S."/>
            <person name="Mann M."/>
        </authorList>
    </citation>
    <scope>PHOSPHORYLATION [LARGE SCALE ANALYSIS] AT SER-431</scope>
    <scope>IDENTIFICATION BY MASS SPECTROMETRY [LARGE SCALE ANALYSIS]</scope>
    <source>
        <tissue>Cervix carcinoma</tissue>
    </source>
</reference>
<reference key="9">
    <citation type="journal article" date="2011" name="BMC Syst. Biol.">
        <title>Initial characterization of the human central proteome.</title>
        <authorList>
            <person name="Burkard T.R."/>
            <person name="Planyavsky M."/>
            <person name="Kaupe I."/>
            <person name="Breitwieser F.P."/>
            <person name="Buerckstuemmer T."/>
            <person name="Bennett K.L."/>
            <person name="Superti-Furga G."/>
            <person name="Colinge J."/>
        </authorList>
    </citation>
    <scope>IDENTIFICATION BY MASS SPECTROMETRY [LARGE SCALE ANALYSIS]</scope>
</reference>
<reference key="10">
    <citation type="journal article" date="2011" name="Sci. Signal.">
        <title>System-wide temporal characterization of the proteome and phosphoproteome of human embryonic stem cell differentiation.</title>
        <authorList>
            <person name="Rigbolt K.T."/>
            <person name="Prokhorova T.A."/>
            <person name="Akimov V."/>
            <person name="Henningsen J."/>
            <person name="Johansen P.T."/>
            <person name="Kratchmarova I."/>
            <person name="Kassem M."/>
            <person name="Mann M."/>
            <person name="Olsen J.V."/>
            <person name="Blagoev B."/>
        </authorList>
    </citation>
    <scope>PHOSPHORYLATION [LARGE SCALE ANALYSIS] AT SER-431 AND SER-520</scope>
    <scope>IDENTIFICATION BY MASS SPECTROMETRY [LARGE SCALE ANALYSIS]</scope>
</reference>
<reference key="11">
    <citation type="journal article" date="2012" name="Mol. Cell. Proteomics">
        <title>Comparative large-scale characterisation of plant vs. mammal proteins reveals similar and idiosyncratic N-alpha acetylation features.</title>
        <authorList>
            <person name="Bienvenut W.V."/>
            <person name="Sumpton D."/>
            <person name="Martinez A."/>
            <person name="Lilla S."/>
            <person name="Espagne C."/>
            <person name="Meinnel T."/>
            <person name="Giglione C."/>
        </authorList>
    </citation>
    <scope>ACETYLATION [LARGE SCALE ANALYSIS] AT ALA-2</scope>
    <scope>CLEAVAGE OF INITIATOR METHIONINE [LARGE SCALE ANALYSIS]</scope>
    <scope>IDENTIFICATION BY MASS SPECTROMETRY [LARGE SCALE ANALYSIS]</scope>
</reference>
<reference key="12">
    <citation type="journal article" date="2013" name="J. Proteome Res.">
        <title>Toward a comprehensive characterization of a human cancer cell phosphoproteome.</title>
        <authorList>
            <person name="Zhou H."/>
            <person name="Di Palma S."/>
            <person name="Preisinger C."/>
            <person name="Peng M."/>
            <person name="Polat A.N."/>
            <person name="Heck A.J."/>
            <person name="Mohammed S."/>
        </authorList>
    </citation>
    <scope>PHOSPHORYLATION [LARGE SCALE ANALYSIS] AT SER-315</scope>
    <scope>IDENTIFICATION BY MASS SPECTROMETRY [LARGE SCALE ANALYSIS]</scope>
    <source>
        <tissue>Cervix carcinoma</tissue>
        <tissue>Erythroleukemia</tissue>
    </source>
</reference>
<reference key="13">
    <citation type="journal article" date="2014" name="J. Proteomics">
        <title>An enzyme assisted RP-RPLC approach for in-depth analysis of human liver phosphoproteome.</title>
        <authorList>
            <person name="Bian Y."/>
            <person name="Song C."/>
            <person name="Cheng K."/>
            <person name="Dong M."/>
            <person name="Wang F."/>
            <person name="Huang J."/>
            <person name="Sun D."/>
            <person name="Wang L."/>
            <person name="Ye M."/>
            <person name="Zou H."/>
        </authorList>
    </citation>
    <scope>PHOSPHORYLATION [LARGE SCALE ANALYSIS] AT SER-431; SER-518 AND SER-520</scope>
    <scope>IDENTIFICATION BY MASS SPECTROMETRY [LARGE SCALE ANALYSIS]</scope>
    <source>
        <tissue>Liver</tissue>
    </source>
</reference>
<reference key="14">
    <citation type="journal article" date="2006" name="Science">
        <title>The consensus coding sequences of human breast and colorectal cancers.</title>
        <authorList>
            <person name="Sjoeblom T."/>
            <person name="Jones S."/>
            <person name="Wood L.D."/>
            <person name="Parsons D.W."/>
            <person name="Lin J."/>
            <person name="Barber T.D."/>
            <person name="Mandelker D."/>
            <person name="Leary R.J."/>
            <person name="Ptak J."/>
            <person name="Silliman N."/>
            <person name="Szabo S."/>
            <person name="Buckhaults P."/>
            <person name="Farrell C."/>
            <person name="Meeh P."/>
            <person name="Markowitz S.D."/>
            <person name="Willis J."/>
            <person name="Dawson D."/>
            <person name="Willson J.K.V."/>
            <person name="Gazdar A.F."/>
            <person name="Hartigan J."/>
            <person name="Wu L."/>
            <person name="Liu C."/>
            <person name="Parmigiani G."/>
            <person name="Park B.H."/>
            <person name="Bachman K.E."/>
            <person name="Papadopoulos N."/>
            <person name="Vogelstein B."/>
            <person name="Kinzler K.W."/>
            <person name="Velculescu V.E."/>
        </authorList>
    </citation>
    <scope>VARIANT [LARGE SCALE ANALYSIS] ASP-193</scope>
</reference>
<name>LRC47_HUMAN</name>
<proteinExistence type="evidence at protein level"/>
<comment type="interaction">
    <interactant intactId="EBI-2509921">
        <id>Q8N1G4</id>
    </interactant>
    <interactant intactId="EBI-6179727">
        <id>PRO_0000038596</id>
        <label>gag</label>
        <dbReference type="UniProtKB" id="P04591"/>
    </interactant>
    <organismsDiffer>true</organismsDiffer>
    <experiments>2</experiments>
</comment>
<dbReference type="EMBL" id="AL365330">
    <property type="status" value="NOT_ANNOTATED_CDS"/>
    <property type="molecule type" value="Genomic_DNA"/>
</dbReference>
<dbReference type="EMBL" id="BC031301">
    <property type="protein sequence ID" value="AAH31301.1"/>
    <property type="molecule type" value="mRNA"/>
</dbReference>
<dbReference type="EMBL" id="AB033011">
    <property type="protein sequence ID" value="BAA86499.1"/>
    <property type="molecule type" value="mRNA"/>
</dbReference>
<dbReference type="CCDS" id="CCDS51.1"/>
<dbReference type="RefSeq" id="NP_065761.1">
    <property type="nucleotide sequence ID" value="NM_020710.3"/>
</dbReference>
<dbReference type="PDB" id="6ZXD">
    <property type="method" value="EM"/>
    <property type="resolution" value="3.20 A"/>
    <property type="chains" value="k=1-583"/>
</dbReference>
<dbReference type="PDB" id="6ZXE">
    <property type="method" value="EM"/>
    <property type="resolution" value="3.00 A"/>
    <property type="chains" value="k=1-583"/>
</dbReference>
<dbReference type="PDB" id="6ZXF">
    <property type="method" value="EM"/>
    <property type="resolution" value="3.70 A"/>
    <property type="chains" value="k=1-583"/>
</dbReference>
<dbReference type="PDB" id="6ZXG">
    <property type="method" value="EM"/>
    <property type="resolution" value="2.60 A"/>
    <property type="chains" value="k=1-583"/>
</dbReference>
<dbReference type="PDB" id="8XP3">
    <property type="method" value="EM"/>
    <property type="resolution" value="3.40 A"/>
    <property type="chains" value="JC=1-583"/>
</dbReference>
<dbReference type="PDBsum" id="6ZXD"/>
<dbReference type="PDBsum" id="6ZXE"/>
<dbReference type="PDBsum" id="6ZXF"/>
<dbReference type="PDBsum" id="6ZXG"/>
<dbReference type="PDBsum" id="8XP3"/>
<dbReference type="EMDB" id="EMD-11517"/>
<dbReference type="EMDB" id="EMD-11518"/>
<dbReference type="EMDB" id="EMD-11519"/>
<dbReference type="EMDB" id="EMD-11520"/>
<dbReference type="EMDB" id="EMD-38549"/>
<dbReference type="SMR" id="Q8N1G4"/>
<dbReference type="BioGRID" id="121540">
    <property type="interactions" value="126"/>
</dbReference>
<dbReference type="FunCoup" id="Q8N1G4">
    <property type="interactions" value="2447"/>
</dbReference>
<dbReference type="IntAct" id="Q8N1G4">
    <property type="interactions" value="44"/>
</dbReference>
<dbReference type="MINT" id="Q8N1G4"/>
<dbReference type="STRING" id="9606.ENSP00000367498"/>
<dbReference type="GlyCosmos" id="Q8N1G4">
    <property type="glycosylation" value="2 sites, 1 glycan"/>
</dbReference>
<dbReference type="GlyGen" id="Q8N1G4">
    <property type="glycosylation" value="2 sites, 1 O-linked glycan (2 sites)"/>
</dbReference>
<dbReference type="iPTMnet" id="Q8N1G4"/>
<dbReference type="PhosphoSitePlus" id="Q8N1G4"/>
<dbReference type="SwissPalm" id="Q8N1G4"/>
<dbReference type="BioMuta" id="LRRC47"/>
<dbReference type="DMDM" id="74750895"/>
<dbReference type="jPOST" id="Q8N1G4"/>
<dbReference type="MassIVE" id="Q8N1G4"/>
<dbReference type="PaxDb" id="9606-ENSP00000367498"/>
<dbReference type="PeptideAtlas" id="Q8N1G4"/>
<dbReference type="ProteomicsDB" id="71601"/>
<dbReference type="Pumba" id="Q8N1G4"/>
<dbReference type="Antibodypedia" id="1623">
    <property type="antibodies" value="31 antibodies from 13 providers"/>
</dbReference>
<dbReference type="DNASU" id="57470"/>
<dbReference type="Ensembl" id="ENST00000378251.3">
    <property type="protein sequence ID" value="ENSP00000367498.1"/>
    <property type="gene ID" value="ENSG00000130764.10"/>
</dbReference>
<dbReference type="GeneID" id="57470"/>
<dbReference type="KEGG" id="hsa:57470"/>
<dbReference type="MANE-Select" id="ENST00000378251.3">
    <property type="protein sequence ID" value="ENSP00000367498.1"/>
    <property type="RefSeq nucleotide sequence ID" value="NM_020710.3"/>
    <property type="RefSeq protein sequence ID" value="NP_065761.1"/>
</dbReference>
<dbReference type="UCSC" id="uc001akx.2">
    <property type="organism name" value="human"/>
</dbReference>
<dbReference type="AGR" id="HGNC:29207"/>
<dbReference type="CTD" id="57470"/>
<dbReference type="DisGeNET" id="57470"/>
<dbReference type="GeneCards" id="LRRC47"/>
<dbReference type="HGNC" id="HGNC:29207">
    <property type="gene designation" value="LRRC47"/>
</dbReference>
<dbReference type="HPA" id="ENSG00000130764">
    <property type="expression patterns" value="Low tissue specificity"/>
</dbReference>
<dbReference type="MIM" id="619154">
    <property type="type" value="gene"/>
</dbReference>
<dbReference type="neXtProt" id="NX_Q8N1G4"/>
<dbReference type="OpenTargets" id="ENSG00000130764"/>
<dbReference type="PharmGKB" id="PA142671507"/>
<dbReference type="VEuPathDB" id="HostDB:ENSG00000130764"/>
<dbReference type="eggNOG" id="KOG2472">
    <property type="taxonomic scope" value="Eukaryota"/>
</dbReference>
<dbReference type="GeneTree" id="ENSGT00530000063489"/>
<dbReference type="HOGENOM" id="CLU_034522_0_0_1"/>
<dbReference type="InParanoid" id="Q8N1G4"/>
<dbReference type="OMA" id="YDVKPPT"/>
<dbReference type="OrthoDB" id="67933at2759"/>
<dbReference type="PAN-GO" id="Q8N1G4">
    <property type="GO annotations" value="0 GO annotations based on evolutionary models"/>
</dbReference>
<dbReference type="PhylomeDB" id="Q8N1G4"/>
<dbReference type="TreeFam" id="TF315742"/>
<dbReference type="PathwayCommons" id="Q8N1G4"/>
<dbReference type="SignaLink" id="Q8N1G4"/>
<dbReference type="BioGRID-ORCS" id="57470">
    <property type="hits" value="18 hits in 1156 CRISPR screens"/>
</dbReference>
<dbReference type="CD-CODE" id="FB4E32DD">
    <property type="entry name" value="Presynaptic clusters and postsynaptic densities"/>
</dbReference>
<dbReference type="ChiTaRS" id="LRRC47">
    <property type="organism name" value="human"/>
</dbReference>
<dbReference type="GenomeRNAi" id="57470"/>
<dbReference type="Pharos" id="Q8N1G4">
    <property type="development level" value="Tdark"/>
</dbReference>
<dbReference type="PRO" id="PR:Q8N1G4"/>
<dbReference type="Proteomes" id="UP000005640">
    <property type="component" value="Chromosome 1"/>
</dbReference>
<dbReference type="RNAct" id="Q8N1G4">
    <property type="molecule type" value="protein"/>
</dbReference>
<dbReference type="Bgee" id="ENSG00000130764">
    <property type="expression patterns" value="Expressed in middle temporal gyrus and 212 other cell types or tissues"/>
</dbReference>
<dbReference type="ExpressionAtlas" id="Q8N1G4">
    <property type="expression patterns" value="baseline and differential"/>
</dbReference>
<dbReference type="GO" id="GO:0004826">
    <property type="term" value="F:phenylalanine-tRNA ligase activity"/>
    <property type="evidence" value="ECO:0007669"/>
    <property type="project" value="InterPro"/>
</dbReference>
<dbReference type="GO" id="GO:0003723">
    <property type="term" value="F:RNA binding"/>
    <property type="evidence" value="ECO:0007005"/>
    <property type="project" value="UniProtKB"/>
</dbReference>
<dbReference type="GO" id="GO:0006432">
    <property type="term" value="P:phenylalanyl-tRNA aminoacylation"/>
    <property type="evidence" value="ECO:0007669"/>
    <property type="project" value="InterPro"/>
</dbReference>
<dbReference type="FunFam" id="3.50.40.10:FF:000004">
    <property type="entry name" value="Leucine rich repeat containing 47"/>
    <property type="match status" value="1"/>
</dbReference>
<dbReference type="FunFam" id="3.80.10.10:FF:000342">
    <property type="entry name" value="Leucine rich repeat containing 47"/>
    <property type="match status" value="1"/>
</dbReference>
<dbReference type="Gene3D" id="3.50.40.10">
    <property type="entry name" value="Phenylalanyl-trna Synthetase, Chain B, domain 3"/>
    <property type="match status" value="1"/>
</dbReference>
<dbReference type="Gene3D" id="3.80.10.10">
    <property type="entry name" value="Ribonuclease Inhibitor"/>
    <property type="match status" value="1"/>
</dbReference>
<dbReference type="InterPro" id="IPR005146">
    <property type="entry name" value="B3/B4_tRNA-bd"/>
</dbReference>
<dbReference type="InterPro" id="IPR001611">
    <property type="entry name" value="Leu-rich_rpt"/>
</dbReference>
<dbReference type="InterPro" id="IPR025875">
    <property type="entry name" value="Leu-rich_rpt_4"/>
</dbReference>
<dbReference type="InterPro" id="IPR003591">
    <property type="entry name" value="Leu-rich_rpt_typical-subtyp"/>
</dbReference>
<dbReference type="InterPro" id="IPR032675">
    <property type="entry name" value="LRR_dom_sf"/>
</dbReference>
<dbReference type="InterPro" id="IPR045060">
    <property type="entry name" value="Phe-tRNA-ligase_IIc_bsu"/>
</dbReference>
<dbReference type="InterPro" id="IPR020825">
    <property type="entry name" value="Phe-tRNA_synthase-like_B3/B4"/>
</dbReference>
<dbReference type="PANTHER" id="PTHR10947:SF3">
    <property type="entry name" value="LEUCINE-RICH REPEAT-CONTAINING PROTEIN 47"/>
    <property type="match status" value="1"/>
</dbReference>
<dbReference type="PANTHER" id="PTHR10947">
    <property type="entry name" value="PHENYLALANYL-TRNA SYNTHETASE BETA CHAIN AND LEUCINE-RICH REPEAT-CONTAINING PROTEIN 47"/>
    <property type="match status" value="1"/>
</dbReference>
<dbReference type="Pfam" id="PF12799">
    <property type="entry name" value="LRR_4"/>
    <property type="match status" value="1"/>
</dbReference>
<dbReference type="Pfam" id="PF13855">
    <property type="entry name" value="LRR_8"/>
    <property type="match status" value="1"/>
</dbReference>
<dbReference type="PRINTS" id="PR00019">
    <property type="entry name" value="LEURICHRPT"/>
</dbReference>
<dbReference type="SMART" id="SM00873">
    <property type="entry name" value="B3_4"/>
    <property type="match status" value="1"/>
</dbReference>
<dbReference type="SMART" id="SM00364">
    <property type="entry name" value="LRR_BAC"/>
    <property type="match status" value="5"/>
</dbReference>
<dbReference type="SMART" id="SM00369">
    <property type="entry name" value="LRR_TYP"/>
    <property type="match status" value="5"/>
</dbReference>
<dbReference type="SUPFAM" id="SSF52058">
    <property type="entry name" value="L domain-like"/>
    <property type="match status" value="1"/>
</dbReference>
<dbReference type="PROSITE" id="PS51450">
    <property type="entry name" value="LRR"/>
    <property type="match status" value="6"/>
</dbReference>
<accession>Q8N1G4</accession>
<accession>Q9ULN5</accession>
<feature type="initiator methionine" description="Removed" evidence="4 9">
    <location>
        <position position="1"/>
    </location>
</feature>
<feature type="chain" id="PRO_0000223926" description="Leucine-rich repeat-containing protein 47">
    <location>
        <begin position="2"/>
        <end position="583"/>
    </location>
</feature>
<feature type="repeat" description="LRR 1">
    <location>
        <begin position="76"/>
        <end position="95"/>
    </location>
</feature>
<feature type="repeat" description="LRR 2">
    <location>
        <begin position="100"/>
        <end position="121"/>
    </location>
</feature>
<feature type="repeat" description="LRR 3">
    <location>
        <begin position="130"/>
        <end position="152"/>
    </location>
</feature>
<feature type="repeat" description="LRR 4">
    <location>
        <begin position="154"/>
        <end position="175"/>
    </location>
</feature>
<feature type="repeat" description="LRR 5">
    <location>
        <begin position="180"/>
        <end position="202"/>
    </location>
</feature>
<feature type="repeat" description="LRR 6">
    <location>
        <begin position="203"/>
        <end position="225"/>
    </location>
</feature>
<feature type="repeat" description="LRR 7">
    <location>
        <begin position="226"/>
        <end position="246"/>
    </location>
</feature>
<feature type="region of interest" description="Disordered" evidence="2">
    <location>
        <begin position="260"/>
        <end position="300"/>
    </location>
</feature>
<feature type="region of interest" description="Disordered" evidence="2">
    <location>
        <begin position="513"/>
        <end position="544"/>
    </location>
</feature>
<feature type="coiled-coil region" evidence="1">
    <location>
        <begin position="402"/>
        <end position="437"/>
    </location>
</feature>
<feature type="compositionally biased region" description="Basic and acidic residues" evidence="2">
    <location>
        <begin position="270"/>
        <end position="281"/>
    </location>
</feature>
<feature type="modified residue" description="N-acetylalanine" evidence="4 9">
    <location>
        <position position="2"/>
    </location>
</feature>
<feature type="modified residue" description="Phosphoserine" evidence="10">
    <location>
        <position position="315"/>
    </location>
</feature>
<feature type="modified residue" description="Phosphoserine" evidence="7 8 11">
    <location>
        <position position="431"/>
    </location>
</feature>
<feature type="modified residue" description="Phosphotyrosine" evidence="6">
    <location>
        <position position="509"/>
    </location>
</feature>
<feature type="modified residue" description="Phosphoserine" evidence="11">
    <location>
        <position position="518"/>
    </location>
</feature>
<feature type="modified residue" description="Phosphoserine" evidence="5 6 8 11">
    <location>
        <position position="520"/>
    </location>
</feature>
<feature type="sequence variant" id="VAR_035471" description="In a colorectal cancer sample; somatic mutation." evidence="3">
    <original>E</original>
    <variation>D</variation>
    <location>
        <position position="193"/>
    </location>
</feature>
<feature type="sequence variant" id="VAR_051118" description="In dbSNP:rs11547614.">
    <original>P</original>
    <variation>L</variation>
    <location>
        <position position="545"/>
    </location>
</feature>
<feature type="sequence variant" id="VAR_051119" description="In dbSNP:rs11547615.">
    <original>V</original>
    <variation>I</variation>
    <location>
        <position position="581"/>
    </location>
</feature>
<feature type="helix" evidence="14">
    <location>
        <begin position="13"/>
        <end position="18"/>
    </location>
</feature>
<feature type="strand" evidence="14">
    <location>
        <begin position="22"/>
        <end position="26"/>
    </location>
</feature>
<feature type="helix" evidence="14">
    <location>
        <begin position="29"/>
        <end position="37"/>
    </location>
</feature>
<feature type="helix" evidence="14">
    <location>
        <begin position="44"/>
        <end position="48"/>
    </location>
</feature>
<feature type="strand" evidence="14">
    <location>
        <begin position="53"/>
        <end position="59"/>
    </location>
</feature>
<feature type="helix" evidence="14">
    <location>
        <begin position="70"/>
        <end position="73"/>
    </location>
</feature>
<feature type="strand" evidence="14">
    <location>
        <begin position="79"/>
        <end position="85"/>
    </location>
</feature>
<feature type="strand" evidence="14">
    <location>
        <begin position="103"/>
        <end position="105"/>
    </location>
</feature>
<feature type="turn" evidence="14">
    <location>
        <begin position="116"/>
        <end position="118"/>
    </location>
</feature>
<feature type="strand" evidence="14">
    <location>
        <begin position="119"/>
        <end position="121"/>
    </location>
</feature>
<feature type="turn" evidence="14">
    <location>
        <begin position="123"/>
        <end position="126"/>
    </location>
</feature>
<feature type="strand" evidence="12">
    <location>
        <begin position="127"/>
        <end position="130"/>
    </location>
</feature>
<feature type="strand" evidence="14">
    <location>
        <begin position="133"/>
        <end position="135"/>
    </location>
</feature>
<feature type="helix" evidence="14">
    <location>
        <begin position="148"/>
        <end position="151"/>
    </location>
</feature>
<feature type="strand" evidence="14">
    <location>
        <begin position="157"/>
        <end position="159"/>
    </location>
</feature>
<feature type="strand" evidence="14">
    <location>
        <begin position="172"/>
        <end position="174"/>
    </location>
</feature>
<feature type="strand" evidence="14">
    <location>
        <begin position="183"/>
        <end position="185"/>
    </location>
</feature>
<feature type="helix" evidence="14">
    <location>
        <begin position="196"/>
        <end position="200"/>
    </location>
</feature>
<feature type="strand" evidence="14">
    <location>
        <begin position="206"/>
        <end position="208"/>
    </location>
</feature>
<feature type="helix" evidence="14">
    <location>
        <begin position="219"/>
        <end position="223"/>
    </location>
</feature>
<feature type="strand" evidence="14">
    <location>
        <begin position="238"/>
        <end position="241"/>
    </location>
</feature>
<feature type="helix" evidence="14">
    <location>
        <begin position="242"/>
        <end position="248"/>
    </location>
</feature>
<feature type="helix" evidence="14">
    <location>
        <begin position="251"/>
        <end position="259"/>
    </location>
</feature>
<feature type="strand" evidence="14">
    <location>
        <begin position="336"/>
        <end position="339"/>
    </location>
</feature>
<feature type="helix" evidence="14">
    <location>
        <begin position="348"/>
        <end position="366"/>
    </location>
</feature>
<feature type="turn" evidence="14">
    <location>
        <begin position="367"/>
        <end position="371"/>
    </location>
</feature>
<feature type="strand" evidence="14">
    <location>
        <begin position="374"/>
        <end position="379"/>
    </location>
</feature>
<feature type="turn" evidence="14">
    <location>
        <begin position="380"/>
        <end position="382"/>
    </location>
</feature>
<feature type="strand" evidence="14">
    <location>
        <begin position="388"/>
        <end position="392"/>
    </location>
</feature>
<feature type="turn" evidence="14">
    <location>
        <begin position="394"/>
        <end position="396"/>
    </location>
</feature>
<feature type="strand" evidence="14">
    <location>
        <begin position="402"/>
        <end position="404"/>
    </location>
</feature>
<feature type="strand" evidence="14">
    <location>
        <begin position="407"/>
        <end position="410"/>
    </location>
</feature>
<feature type="helix" evidence="14">
    <location>
        <begin position="411"/>
        <end position="420"/>
    </location>
</feature>
<feature type="turn" evidence="14">
    <location>
        <begin position="425"/>
        <end position="428"/>
    </location>
</feature>
<feature type="helix" evidence="14">
    <location>
        <begin position="437"/>
        <end position="439"/>
    </location>
</feature>
<feature type="strand" evidence="14">
    <location>
        <begin position="447"/>
        <end position="452"/>
    </location>
</feature>
<feature type="strand" evidence="13">
    <location>
        <begin position="456"/>
        <end position="460"/>
    </location>
</feature>
<feature type="turn" evidence="14">
    <location>
        <begin position="462"/>
        <end position="464"/>
    </location>
</feature>
<feature type="strand" evidence="14">
    <location>
        <begin position="479"/>
        <end position="484"/>
    </location>
</feature>
<feature type="helix" evidence="14">
    <location>
        <begin position="491"/>
        <end position="503"/>
    </location>
</feature>
<keyword id="KW-0002">3D-structure</keyword>
<keyword id="KW-0007">Acetylation</keyword>
<keyword id="KW-0175">Coiled coil</keyword>
<keyword id="KW-0903">Direct protein sequencing</keyword>
<keyword id="KW-0433">Leucine-rich repeat</keyword>
<keyword id="KW-0597">Phosphoprotein</keyword>
<keyword id="KW-1267">Proteomics identification</keyword>
<keyword id="KW-1185">Reference proteome</keyword>
<keyword id="KW-0677">Repeat</keyword>
<protein>
    <recommendedName>
        <fullName>Leucine-rich repeat-containing protein 47</fullName>
    </recommendedName>
</protein>